<dbReference type="EC" id="2.4.2.21" evidence="1"/>
<dbReference type="EMBL" id="AE016795">
    <property type="protein sequence ID" value="AAO11130.1"/>
    <property type="molecule type" value="Genomic_DNA"/>
</dbReference>
<dbReference type="RefSeq" id="WP_011080624.1">
    <property type="nucleotide sequence ID" value="NC_004459.3"/>
</dbReference>
<dbReference type="SMR" id="Q8D921"/>
<dbReference type="KEGG" id="vvu:VV1_2788"/>
<dbReference type="HOGENOM" id="CLU_002982_0_0_6"/>
<dbReference type="UniPathway" id="UPA00061">
    <property type="reaction ID" value="UER00516"/>
</dbReference>
<dbReference type="Proteomes" id="UP000002275">
    <property type="component" value="Chromosome 1"/>
</dbReference>
<dbReference type="GO" id="GO:0008939">
    <property type="term" value="F:nicotinate-nucleotide-dimethylbenzimidazole phosphoribosyltransferase activity"/>
    <property type="evidence" value="ECO:0007669"/>
    <property type="project" value="UniProtKB-UniRule"/>
</dbReference>
<dbReference type="GO" id="GO:0009236">
    <property type="term" value="P:cobalamin biosynthetic process"/>
    <property type="evidence" value="ECO:0007669"/>
    <property type="project" value="UniProtKB-KW"/>
</dbReference>
<dbReference type="CDD" id="cd02439">
    <property type="entry name" value="DMB-PRT_CobT"/>
    <property type="match status" value="1"/>
</dbReference>
<dbReference type="FunFam" id="3.40.50.10210:FF:000001">
    <property type="entry name" value="Nicotinate-nucleotide--dimethylbenzimidazole phosphoribosyltransferase"/>
    <property type="match status" value="1"/>
</dbReference>
<dbReference type="Gene3D" id="1.10.1610.10">
    <property type="match status" value="1"/>
</dbReference>
<dbReference type="Gene3D" id="3.40.50.10210">
    <property type="match status" value="1"/>
</dbReference>
<dbReference type="HAMAP" id="MF_00230">
    <property type="entry name" value="CobT"/>
    <property type="match status" value="1"/>
</dbReference>
<dbReference type="InterPro" id="IPR003200">
    <property type="entry name" value="Nict_dMeBzImd_PRibTrfase"/>
</dbReference>
<dbReference type="InterPro" id="IPR017846">
    <property type="entry name" value="Nict_dMeBzImd_PRibTrfase_bact"/>
</dbReference>
<dbReference type="InterPro" id="IPR023195">
    <property type="entry name" value="Nict_dMeBzImd_PRibTrfase_N"/>
</dbReference>
<dbReference type="InterPro" id="IPR036087">
    <property type="entry name" value="Nict_dMeBzImd_PRibTrfase_sf"/>
</dbReference>
<dbReference type="NCBIfam" id="TIGR03160">
    <property type="entry name" value="cobT_DBIPRT"/>
    <property type="match status" value="1"/>
</dbReference>
<dbReference type="NCBIfam" id="NF000996">
    <property type="entry name" value="PRK00105.1"/>
    <property type="match status" value="1"/>
</dbReference>
<dbReference type="PANTHER" id="PTHR43463">
    <property type="entry name" value="NICOTINATE-NUCLEOTIDE--DIMETHYLBENZIMIDAZOLE PHOSPHORIBOSYLTRANSFERASE"/>
    <property type="match status" value="1"/>
</dbReference>
<dbReference type="PANTHER" id="PTHR43463:SF1">
    <property type="entry name" value="NICOTINATE-NUCLEOTIDE--DIMETHYLBENZIMIDAZOLE PHOSPHORIBOSYLTRANSFERASE"/>
    <property type="match status" value="1"/>
</dbReference>
<dbReference type="Pfam" id="PF02277">
    <property type="entry name" value="DBI_PRT"/>
    <property type="match status" value="1"/>
</dbReference>
<dbReference type="SUPFAM" id="SSF52733">
    <property type="entry name" value="Nicotinate mononucleotide:5,6-dimethylbenzimidazole phosphoribosyltransferase (CobT)"/>
    <property type="match status" value="1"/>
</dbReference>
<protein>
    <recommendedName>
        <fullName evidence="1">Nicotinate-nucleotide--dimethylbenzimidazole phosphoribosyltransferase</fullName>
        <shortName evidence="1">NN:DBI PRT</shortName>
        <ecNumber evidence="1">2.4.2.21</ecNumber>
    </recommendedName>
    <alternativeName>
        <fullName evidence="1">N(1)-alpha-phosphoribosyltransferase</fullName>
    </alternativeName>
</protein>
<accession>Q8D921</accession>
<organism>
    <name type="scientific">Vibrio vulnificus (strain CMCP6)</name>
    <dbReference type="NCBI Taxonomy" id="216895"/>
    <lineage>
        <taxon>Bacteria</taxon>
        <taxon>Pseudomonadati</taxon>
        <taxon>Pseudomonadota</taxon>
        <taxon>Gammaproteobacteria</taxon>
        <taxon>Vibrionales</taxon>
        <taxon>Vibrionaceae</taxon>
        <taxon>Vibrio</taxon>
    </lineage>
</organism>
<keyword id="KW-0169">Cobalamin biosynthesis</keyword>
<keyword id="KW-0328">Glycosyltransferase</keyword>
<keyword id="KW-0808">Transferase</keyword>
<sequence>MLEQQFAAEIQHIIDNKTKPLGALGQLEQVALQLALIQSQGKEQAATHIELKQPQMLLFAGDHGVADEGVSIAPSAVTQQMVLNFLAGGAAINCFCALHSIDLTVVDCGILLPVDSDAPNLILRRLGSRTANFAFESAMTIEQVEQALRNGQQIAAEKIAQGADLLMFGEMGIANTSSAAALLSALSGHEVDHCVGRGTGINEEQLSHKIKVVAQGVGRCEGLSVNAILAEVGGFEIVTMAGAFIAAAEHKTPVLVDGFIVSVAAYIATLLKPEVRDYLLFAHRSEEQGHQIVLSLLEAKPLLDLGLRLGEGTGAALAYPLLKAAAQFYNNMASFESAGVTV</sequence>
<evidence type="ECO:0000255" key="1">
    <source>
        <dbReference type="HAMAP-Rule" id="MF_00230"/>
    </source>
</evidence>
<name>COBT_VIBVU</name>
<gene>
    <name evidence="1" type="primary">cobT</name>
    <name type="ordered locus">VV1_2788</name>
</gene>
<feature type="chain" id="PRO_0000167077" description="Nicotinate-nucleotide--dimethylbenzimidazole phosphoribosyltransferase">
    <location>
        <begin position="1"/>
        <end position="342"/>
    </location>
</feature>
<feature type="active site" description="Proton acceptor" evidence="1">
    <location>
        <position position="311"/>
    </location>
</feature>
<reference key="1">
    <citation type="submission" date="2002-12" db="EMBL/GenBank/DDBJ databases">
        <title>Complete genome sequence of Vibrio vulnificus CMCP6.</title>
        <authorList>
            <person name="Rhee J.H."/>
            <person name="Kim S.Y."/>
            <person name="Chung S.S."/>
            <person name="Kim J.J."/>
            <person name="Moon Y.H."/>
            <person name="Jeong H."/>
            <person name="Choy H.E."/>
        </authorList>
    </citation>
    <scope>NUCLEOTIDE SEQUENCE [LARGE SCALE GENOMIC DNA]</scope>
    <source>
        <strain>CMCP6</strain>
    </source>
</reference>
<proteinExistence type="inferred from homology"/>
<comment type="function">
    <text evidence="1">Catalyzes the synthesis of alpha-ribazole-5'-phosphate from nicotinate mononucleotide (NAMN) and 5,6-dimethylbenzimidazole (DMB).</text>
</comment>
<comment type="catalytic activity">
    <reaction evidence="1">
        <text>5,6-dimethylbenzimidazole + nicotinate beta-D-ribonucleotide = alpha-ribazole 5'-phosphate + nicotinate + H(+)</text>
        <dbReference type="Rhea" id="RHEA:11196"/>
        <dbReference type="ChEBI" id="CHEBI:15378"/>
        <dbReference type="ChEBI" id="CHEBI:15890"/>
        <dbReference type="ChEBI" id="CHEBI:32544"/>
        <dbReference type="ChEBI" id="CHEBI:57502"/>
        <dbReference type="ChEBI" id="CHEBI:57918"/>
        <dbReference type="EC" id="2.4.2.21"/>
    </reaction>
</comment>
<comment type="pathway">
    <text evidence="1">Nucleoside biosynthesis; alpha-ribazole biosynthesis; alpha-ribazole from 5,6-dimethylbenzimidazole: step 1/2.</text>
</comment>
<comment type="similarity">
    <text evidence="1">Belongs to the CobT family.</text>
</comment>